<protein>
    <recommendedName>
        <fullName>P-selectin</fullName>
    </recommendedName>
    <alternativeName>
        <fullName>CD62 antigen-like family member P</fullName>
    </alternativeName>
    <alternativeName>
        <fullName>Granule membrane protein 140</fullName>
        <shortName>GMP-140</shortName>
    </alternativeName>
    <alternativeName>
        <fullName>Leukocyte-endothelial cell adhesion molecule 3</fullName>
        <shortName>LECAM3</shortName>
    </alternativeName>
    <alternativeName>
        <fullName>Platelet activation dependent granule-external membrane protein</fullName>
        <shortName>PADGEM</shortName>
    </alternativeName>
    <cdAntigenName>CD62P</cdAntigenName>
</protein>
<gene>
    <name type="primary">SELP</name>
</gene>
<accession>P42201</accession>
<keyword id="KW-0106">Calcium</keyword>
<keyword id="KW-0130">Cell adhesion</keyword>
<keyword id="KW-1003">Cell membrane</keyword>
<keyword id="KW-1015">Disulfide bond</keyword>
<keyword id="KW-0245">EGF-like domain</keyword>
<keyword id="KW-0325">Glycoprotein</keyword>
<keyword id="KW-0430">Lectin</keyword>
<keyword id="KW-0472">Membrane</keyword>
<keyword id="KW-0479">Metal-binding</keyword>
<keyword id="KW-1185">Reference proteome</keyword>
<keyword id="KW-0677">Repeat</keyword>
<keyword id="KW-0732">Signal</keyword>
<keyword id="KW-0768">Sushi</keyword>
<keyword id="KW-0812">Transmembrane</keyword>
<keyword id="KW-1133">Transmembrane helix</keyword>
<feature type="signal peptide" evidence="1">
    <location>
        <begin position="1"/>
        <end position="41"/>
    </location>
</feature>
<feature type="chain" id="PRO_0000017497" description="P-selectin">
    <location>
        <begin position="42"/>
        <end position="646"/>
    </location>
</feature>
<feature type="topological domain" description="Extracellular" evidence="3">
    <location>
        <begin position="42"/>
        <end position="587"/>
    </location>
</feature>
<feature type="transmembrane region" description="Helical" evidence="3">
    <location>
        <begin position="588"/>
        <end position="611"/>
    </location>
</feature>
<feature type="topological domain" description="Cytoplasmic" evidence="3">
    <location>
        <begin position="612"/>
        <end position="646"/>
    </location>
</feature>
<feature type="domain" description="C-type lectin" evidence="4">
    <location>
        <begin position="58"/>
        <end position="158"/>
    </location>
</feature>
<feature type="domain" description="EGF-like" evidence="5">
    <location>
        <begin position="159"/>
        <end position="195"/>
    </location>
</feature>
<feature type="domain" description="Sushi 1" evidence="6">
    <location>
        <begin position="198"/>
        <end position="259"/>
    </location>
</feature>
<feature type="domain" description="Sushi 2" evidence="6">
    <location>
        <begin position="260"/>
        <end position="321"/>
    </location>
</feature>
<feature type="domain" description="Sushi 3" evidence="6">
    <location>
        <begin position="322"/>
        <end position="383"/>
    </location>
</feature>
<feature type="domain" description="Sushi 4" evidence="6">
    <location>
        <begin position="384"/>
        <end position="445"/>
    </location>
</feature>
<feature type="domain" description="Sushi 5" evidence="6">
    <location>
        <begin position="456"/>
        <end position="517"/>
    </location>
</feature>
<feature type="domain" description="Sushi 6" evidence="6">
    <location>
        <begin position="518"/>
        <end position="579"/>
    </location>
</feature>
<feature type="region of interest" description="Interaction with SNX17" evidence="1">
    <location>
        <begin position="637"/>
        <end position="646"/>
    </location>
</feature>
<feature type="short sequence motif" description="Endocytosis signal" evidence="9">
    <location>
        <begin position="634"/>
        <end position="637"/>
    </location>
</feature>
<feature type="binding site" evidence="2">
    <location>
        <position position="121"/>
    </location>
    <ligand>
        <name>Ca(2+)</name>
        <dbReference type="ChEBI" id="CHEBI:29108"/>
    </ligand>
</feature>
<feature type="binding site" evidence="2">
    <location>
        <position position="123"/>
    </location>
    <ligand>
        <name>a carbohydrate</name>
        <dbReference type="ChEBI" id="CHEBI:16646"/>
    </ligand>
</feature>
<feature type="binding site" evidence="2">
    <location>
        <position position="123"/>
    </location>
    <ligand>
        <name>Ca(2+)</name>
        <dbReference type="ChEBI" id="CHEBI:29108"/>
    </ligand>
</feature>
<feature type="binding site" evidence="2">
    <location>
        <position position="124"/>
    </location>
    <ligand>
        <name>Ca(2+)</name>
        <dbReference type="ChEBI" id="CHEBI:29108"/>
    </ligand>
</feature>
<feature type="binding site" evidence="2">
    <location>
        <position position="133"/>
    </location>
    <ligand>
        <name>a carbohydrate</name>
        <dbReference type="ChEBI" id="CHEBI:16646"/>
    </ligand>
</feature>
<feature type="binding site" evidence="2">
    <location>
        <position position="146"/>
    </location>
    <ligand>
        <name>a carbohydrate</name>
        <dbReference type="ChEBI" id="CHEBI:16646"/>
    </ligand>
</feature>
<feature type="binding site" evidence="2">
    <location>
        <position position="146"/>
    </location>
    <ligand>
        <name>Ca(2+)</name>
        <dbReference type="ChEBI" id="CHEBI:29108"/>
    </ligand>
</feature>
<feature type="binding site" evidence="2">
    <location>
        <position position="147"/>
    </location>
    <ligand>
        <name>Ca(2+)</name>
        <dbReference type="ChEBI" id="CHEBI:29108"/>
    </ligand>
</feature>
<feature type="glycosylation site" description="N-linked (GlcNAc...) asparagine" evidence="3">
    <location>
        <position position="48"/>
    </location>
</feature>
<feature type="glycosylation site" description="N-linked (GlcNAc...) asparagine" evidence="3">
    <location>
        <position position="54"/>
    </location>
</feature>
<feature type="glycosylation site" description="N-linked (GlcNAc...) asparagine" evidence="3">
    <location>
        <position position="80"/>
    </location>
</feature>
<feature type="glycosylation site" description="N-linked (GlcNAc...) asparagine" evidence="3">
    <location>
        <position position="180"/>
    </location>
</feature>
<feature type="glycosylation site" description="N-linked (GlcNAc...) asparagine" evidence="3">
    <location>
        <position position="212"/>
    </location>
</feature>
<feature type="glycosylation site" description="N-linked (GlcNAc...) asparagine" evidence="3">
    <location>
        <position position="219"/>
    </location>
</feature>
<feature type="glycosylation site" description="N-linked (GlcNAc...) asparagine" evidence="3">
    <location>
        <position position="336"/>
    </location>
</feature>
<feature type="glycosylation site" description="N-linked (GlcNAc...) asparagine" evidence="3">
    <location>
        <position position="481"/>
    </location>
</feature>
<feature type="glycosylation site" description="N-linked (GlcNAc...) asparagine" evidence="3">
    <location>
        <position position="532"/>
    </location>
</feature>
<feature type="glycosylation site" description="N-linked (GlcNAc...) asparagine" evidence="3">
    <location>
        <position position="539"/>
    </location>
</feature>
<feature type="glycosylation site" description="N-linked (GlcNAc...) asparagine" evidence="3">
    <location>
        <position position="557"/>
    </location>
</feature>
<feature type="disulfide bond" evidence="2">
    <location>
        <begin position="60"/>
        <end position="158"/>
    </location>
</feature>
<feature type="disulfide bond" evidence="2">
    <location>
        <begin position="131"/>
        <end position="150"/>
    </location>
</feature>
<feature type="disulfide bond" evidence="2">
    <location>
        <begin position="163"/>
        <end position="174"/>
    </location>
</feature>
<feature type="disulfide bond" evidence="2">
    <location>
        <begin position="168"/>
        <end position="183"/>
    </location>
</feature>
<feature type="disulfide bond" evidence="2">
    <location>
        <begin position="185"/>
        <end position="194"/>
    </location>
</feature>
<feature type="disulfide bond" evidence="1">
    <location>
        <begin position="200"/>
        <end position="244"/>
    </location>
</feature>
<feature type="disulfide bond" evidence="1">
    <location>
        <begin position="230"/>
        <end position="257"/>
    </location>
</feature>
<feature type="disulfide bond" evidence="1">
    <location>
        <begin position="262"/>
        <end position="306"/>
    </location>
</feature>
<feature type="disulfide bond" evidence="1">
    <location>
        <begin position="292"/>
        <end position="319"/>
    </location>
</feature>
<feature type="disulfide bond" evidence="1">
    <location>
        <begin position="324"/>
        <end position="368"/>
    </location>
</feature>
<feature type="disulfide bond" evidence="1">
    <location>
        <begin position="354"/>
        <end position="381"/>
    </location>
</feature>
<feature type="disulfide bond" evidence="1">
    <location>
        <begin position="386"/>
        <end position="430"/>
    </location>
</feature>
<feature type="disulfide bond" evidence="1">
    <location>
        <begin position="416"/>
        <end position="443"/>
    </location>
</feature>
<feature type="disulfide bond" evidence="1">
    <location>
        <begin position="458"/>
        <end position="502"/>
    </location>
</feature>
<feature type="disulfide bond" evidence="1">
    <location>
        <begin position="488"/>
        <end position="515"/>
    </location>
</feature>
<feature type="disulfide bond" evidence="1">
    <location>
        <begin position="520"/>
        <end position="564"/>
    </location>
</feature>
<feature type="disulfide bond" evidence="1">
    <location>
        <begin position="550"/>
        <end position="577"/>
    </location>
</feature>
<organism>
    <name type="scientific">Bos taurus</name>
    <name type="common">Bovine</name>
    <dbReference type="NCBI Taxonomy" id="9913"/>
    <lineage>
        <taxon>Eukaryota</taxon>
        <taxon>Metazoa</taxon>
        <taxon>Chordata</taxon>
        <taxon>Craniata</taxon>
        <taxon>Vertebrata</taxon>
        <taxon>Euteleostomi</taxon>
        <taxon>Mammalia</taxon>
        <taxon>Eutheria</taxon>
        <taxon>Laurasiatheria</taxon>
        <taxon>Artiodactyla</taxon>
        <taxon>Ruminantia</taxon>
        <taxon>Pecora</taxon>
        <taxon>Bovidae</taxon>
        <taxon>Bovinae</taxon>
        <taxon>Bos</taxon>
    </lineage>
</organism>
<comment type="function">
    <text evidence="2 7">Ca(2+)-dependent receptor for myeloid cells that binds to carbohydrates on neutrophils and monocytes (PubMed:7683458). Mediates the interaction of activated endothelial cells or platelets with leukocytes. The ligand recognized is sialyl-Lewis X. Mediates rapid rolling of leukocyte rolling over vascular surfaces during the initial steps in inflammation through interaction with SELPLG (By similarity). Mediates cell-cell interactions and cell adhesion via the interaction with integrin alpha-IIb/beta3 (ITGA2B:ITGB3) and integrin alpha-V/beta-3 (ITGAV:ITGB3) (By similarity).</text>
</comment>
<comment type="subunit">
    <text evidence="2">Interacts with SNX17. Interacts with SELPLG/PSGL1 and PODXL2 and mediates neutrophil adhesion and leukocyte rolling. This interaction requires the sialyl-Lewis X epitope of SELPLG and PODXL2, and specific tyrosine sulfation on SELPLG. Interacts (via C-type lectin domain) with alpha-IIb/beta3 integrin ITGA2B:ITGB3 and alpha-V/beta-3 integrin ITGAV:ITGB3 (By similarity). Interacts with alpha5/beta1 integrin ITGA5:ITGB1 and alpha4/beta1 integrin ITGA4:ITGB (By similarity).</text>
</comment>
<comment type="subcellular location">
    <subcellularLocation>
        <location evidence="7">Cell membrane</location>
        <topology evidence="9">Single-pass type I membrane protein</topology>
    </subcellularLocation>
</comment>
<comment type="tissue specificity">
    <text evidence="8">Stored in the alpha-granules of platelets and Weibel-Palade bodies of endothelial cells. Upon cell activation by agonists, P-selectin is transported rapidly to the cell surface.</text>
</comment>
<comment type="domain">
    <text evidence="2">The C-type lectin domain is required for binding to integrins (By similarity). Binding to soluble integrins alpha-V/beta-3 (ITGAV:ITGB3) and alpha-IIb/beta3 (ITGA2B:ITGB) is cation-dependent (By similarity). Binds to the allosteric site (site 2) of integrins and activates them (By similarity). The interaction with integrins may mediate cell-cell interactions and cell adhesion (By similarity).</text>
</comment>
<comment type="similarity">
    <text evidence="9">Belongs to the selectin/LECAM family.</text>
</comment>
<reference key="1">
    <citation type="journal article" date="1993" name="Biochem. Biophys. Res. Commun.">
        <title>Isolation and characterization of a bovine cDNA encoding a functional homolog of human P-selectin.</title>
        <authorList>
            <person name="Strubel N.A."/>
            <person name="Nguyen M."/>
            <person name="Kansas G.S."/>
            <person name="Tedder T.F."/>
            <person name="Bischoff J."/>
        </authorList>
    </citation>
    <scope>NUCLEOTIDE SEQUENCE [MRNA]</scope>
    <scope>FUNCTION</scope>
    <scope>SUBCELLULAR LOCATION</scope>
    <source>
        <tissue>Capillary endothelium</tissue>
    </source>
</reference>
<sequence>MASCPKAIWNWRFQRAVFRTVQLLCFSVLIFEVINQKEVSAWTYHYSNKTYSWNYSRAFCQKYYTDLVAIQNKNEIAYLNETIPYYNSYYWIGIRKINNKWTWVGTKKTLTEEAENWADNEPNNKRNNQDCVEIYIKSLSAPGKWNDEPCWKRKRALCYRASCQDMSCSKQGECIETIGNYTCSCYPGFYGPECEYVRECGEFDLPQHVHMNCSHPLGNFSFNSHCSFHCAEGYALNGPSELECLASGIWTNSPPQCVAVQCPALKSPEQGSMSCVQSAEAFQHQSSCSFSCEEGFALVGPEVVHCTALGVWTAPTPVCKALQCQDLPTSTKARVNCSHPFGDFRYQSTCSFTCDEGSFLVGASVLQCLDTGNWDAPFPECQAVTCAALPNPQNGEKTCVQPLGGSSYESTCWFTCHEGFSLSGPERLDCTPSGHWTGSPPTCEEVDTVSAPAPGVQCPTLIAPKQGTMSCQHHVRNFGLNTTCHFGCKAGFTLLGDSALQCRPSRQWTAAAPTCRAVKCAKLPVTEPIVMNCSNPWGNFSYGSTCSFHCPEGQLLNGSERTVCQENGQWSTTMPTCQAGPLTIQETLTYVGGAAAGTTGLVTGSILLALLRRRCRQKDDGKSPLNPQSHLGTYGVFTNAAFDPSP</sequence>
<dbReference type="EMBL" id="L12041">
    <property type="protein sequence ID" value="AAA30743.1"/>
    <property type="molecule type" value="mRNA"/>
</dbReference>
<dbReference type="PIR" id="JN0473">
    <property type="entry name" value="JN0473"/>
</dbReference>
<dbReference type="RefSeq" id="NP_776608.1">
    <property type="nucleotide sequence ID" value="NM_174183.2"/>
</dbReference>
<dbReference type="SMR" id="P42201"/>
<dbReference type="FunCoup" id="P42201">
    <property type="interactions" value="75"/>
</dbReference>
<dbReference type="STRING" id="9913.ENSBTAP00000027661"/>
<dbReference type="GlyCosmos" id="P42201">
    <property type="glycosylation" value="11 sites, No reported glycans"/>
</dbReference>
<dbReference type="GlyGen" id="P42201">
    <property type="glycosylation" value="11 sites"/>
</dbReference>
<dbReference type="GeneID" id="281486"/>
<dbReference type="KEGG" id="bta:281486"/>
<dbReference type="CTD" id="6403"/>
<dbReference type="InParanoid" id="P42201"/>
<dbReference type="OrthoDB" id="406096at2759"/>
<dbReference type="Proteomes" id="UP000009136">
    <property type="component" value="Unplaced"/>
</dbReference>
<dbReference type="GO" id="GO:0009897">
    <property type="term" value="C:external side of plasma membrane"/>
    <property type="evidence" value="ECO:0000318"/>
    <property type="project" value="GO_Central"/>
</dbReference>
<dbReference type="GO" id="GO:0005615">
    <property type="term" value="C:extracellular space"/>
    <property type="evidence" value="ECO:0000318"/>
    <property type="project" value="GO_Central"/>
</dbReference>
<dbReference type="GO" id="GO:0005886">
    <property type="term" value="C:plasma membrane"/>
    <property type="evidence" value="ECO:0000250"/>
    <property type="project" value="UniProtKB"/>
</dbReference>
<dbReference type="GO" id="GO:0005509">
    <property type="term" value="F:calcium ion binding"/>
    <property type="evidence" value="ECO:0000250"/>
    <property type="project" value="UniProtKB"/>
</dbReference>
<dbReference type="GO" id="GO:0005178">
    <property type="term" value="F:integrin binding"/>
    <property type="evidence" value="ECO:0000250"/>
    <property type="project" value="UniProtKB"/>
</dbReference>
<dbReference type="GO" id="GO:0070492">
    <property type="term" value="F:oligosaccharide binding"/>
    <property type="evidence" value="ECO:0000250"/>
    <property type="project" value="UniProtKB"/>
</dbReference>
<dbReference type="GO" id="GO:0033691">
    <property type="term" value="F:sialic acid binding"/>
    <property type="evidence" value="ECO:0000318"/>
    <property type="project" value="GO_Central"/>
</dbReference>
<dbReference type="GO" id="GO:0016339">
    <property type="term" value="P:calcium-dependent cell-cell adhesion via plasma membrane cell adhesion molecules"/>
    <property type="evidence" value="ECO:0000250"/>
    <property type="project" value="UniProtKB"/>
</dbReference>
<dbReference type="GO" id="GO:0098609">
    <property type="term" value="P:cell-cell adhesion"/>
    <property type="evidence" value="ECO:0000250"/>
    <property type="project" value="UniProtKB"/>
</dbReference>
<dbReference type="GO" id="GO:0007157">
    <property type="term" value="P:heterophilic cell-cell adhesion via plasma membrane cell adhesion molecules"/>
    <property type="evidence" value="ECO:0000318"/>
    <property type="project" value="GO_Central"/>
</dbReference>
<dbReference type="GO" id="GO:0050901">
    <property type="term" value="P:leukocyte tethering or rolling"/>
    <property type="evidence" value="ECO:0000250"/>
    <property type="project" value="UniProtKB"/>
</dbReference>
<dbReference type="GO" id="GO:1903238">
    <property type="term" value="P:positive regulation of leukocyte tethering or rolling"/>
    <property type="evidence" value="ECO:0000250"/>
    <property type="project" value="UniProtKB"/>
</dbReference>
<dbReference type="GO" id="GO:0034097">
    <property type="term" value="P:response to cytokine"/>
    <property type="evidence" value="ECO:0000318"/>
    <property type="project" value="GO_Central"/>
</dbReference>
<dbReference type="CDD" id="cd00033">
    <property type="entry name" value="CCP"/>
    <property type="match status" value="6"/>
</dbReference>
<dbReference type="CDD" id="cd03592">
    <property type="entry name" value="CLECT_selectins_like"/>
    <property type="match status" value="1"/>
</dbReference>
<dbReference type="CDD" id="cd00054">
    <property type="entry name" value="EGF_CA"/>
    <property type="match status" value="1"/>
</dbReference>
<dbReference type="FunFam" id="3.10.100.10:FF:000007">
    <property type="entry name" value="L-selectin"/>
    <property type="match status" value="1"/>
</dbReference>
<dbReference type="FunFam" id="2.10.25.10:FF:000176">
    <property type="entry name" value="Selectin P"/>
    <property type="match status" value="1"/>
</dbReference>
<dbReference type="FunFam" id="2.10.70.10:FF:000001">
    <property type="entry name" value="Selectin P"/>
    <property type="match status" value="6"/>
</dbReference>
<dbReference type="Gene3D" id="2.10.70.10">
    <property type="entry name" value="Complement Module, domain 1"/>
    <property type="match status" value="6"/>
</dbReference>
<dbReference type="Gene3D" id="2.10.25.10">
    <property type="entry name" value="Laminin"/>
    <property type="match status" value="1"/>
</dbReference>
<dbReference type="Gene3D" id="3.10.100.10">
    <property type="entry name" value="Mannose-Binding Protein A, subunit A"/>
    <property type="match status" value="1"/>
</dbReference>
<dbReference type="InterPro" id="IPR001304">
    <property type="entry name" value="C-type_lectin-like"/>
</dbReference>
<dbReference type="InterPro" id="IPR016186">
    <property type="entry name" value="C-type_lectin-like/link_sf"/>
</dbReference>
<dbReference type="InterPro" id="IPR018378">
    <property type="entry name" value="C-type_lectin_CS"/>
</dbReference>
<dbReference type="InterPro" id="IPR050350">
    <property type="entry name" value="Compl-Cell_Adhes-Reg"/>
</dbReference>
<dbReference type="InterPro" id="IPR016187">
    <property type="entry name" value="CTDL_fold"/>
</dbReference>
<dbReference type="InterPro" id="IPR000742">
    <property type="entry name" value="EGF-like_dom"/>
</dbReference>
<dbReference type="InterPro" id="IPR033991">
    <property type="entry name" value="Selectin_CTLD"/>
</dbReference>
<dbReference type="InterPro" id="IPR002396">
    <property type="entry name" value="Selectin_superfamily"/>
</dbReference>
<dbReference type="InterPro" id="IPR035976">
    <property type="entry name" value="Sushi/SCR/CCP_sf"/>
</dbReference>
<dbReference type="InterPro" id="IPR000436">
    <property type="entry name" value="Sushi_SCR_CCP_dom"/>
</dbReference>
<dbReference type="PANTHER" id="PTHR19325">
    <property type="entry name" value="COMPLEMENT COMPONENT-RELATED SUSHI DOMAIN-CONTAINING"/>
    <property type="match status" value="1"/>
</dbReference>
<dbReference type="PANTHER" id="PTHR19325:SF493">
    <property type="entry name" value="E-SELECTIN"/>
    <property type="match status" value="1"/>
</dbReference>
<dbReference type="Pfam" id="PF00008">
    <property type="entry name" value="EGF"/>
    <property type="match status" value="1"/>
</dbReference>
<dbReference type="Pfam" id="PF00059">
    <property type="entry name" value="Lectin_C"/>
    <property type="match status" value="1"/>
</dbReference>
<dbReference type="Pfam" id="PF00084">
    <property type="entry name" value="Sushi"/>
    <property type="match status" value="6"/>
</dbReference>
<dbReference type="PRINTS" id="PR00343">
    <property type="entry name" value="SELECTIN"/>
</dbReference>
<dbReference type="SMART" id="SM00032">
    <property type="entry name" value="CCP"/>
    <property type="match status" value="6"/>
</dbReference>
<dbReference type="SMART" id="SM00034">
    <property type="entry name" value="CLECT"/>
    <property type="match status" value="1"/>
</dbReference>
<dbReference type="SMART" id="SM00181">
    <property type="entry name" value="EGF"/>
    <property type="match status" value="2"/>
</dbReference>
<dbReference type="SUPFAM" id="SSF56436">
    <property type="entry name" value="C-type lectin-like"/>
    <property type="match status" value="1"/>
</dbReference>
<dbReference type="SUPFAM" id="SSF57535">
    <property type="entry name" value="Complement control module/SCR domain"/>
    <property type="match status" value="6"/>
</dbReference>
<dbReference type="SUPFAM" id="SSF57196">
    <property type="entry name" value="EGF/Laminin"/>
    <property type="match status" value="1"/>
</dbReference>
<dbReference type="PROSITE" id="PS00615">
    <property type="entry name" value="C_TYPE_LECTIN_1"/>
    <property type="match status" value="1"/>
</dbReference>
<dbReference type="PROSITE" id="PS50041">
    <property type="entry name" value="C_TYPE_LECTIN_2"/>
    <property type="match status" value="1"/>
</dbReference>
<dbReference type="PROSITE" id="PS00022">
    <property type="entry name" value="EGF_1"/>
    <property type="match status" value="1"/>
</dbReference>
<dbReference type="PROSITE" id="PS01186">
    <property type="entry name" value="EGF_2"/>
    <property type="match status" value="1"/>
</dbReference>
<dbReference type="PROSITE" id="PS50026">
    <property type="entry name" value="EGF_3"/>
    <property type="match status" value="1"/>
</dbReference>
<dbReference type="PROSITE" id="PS50923">
    <property type="entry name" value="SUSHI"/>
    <property type="match status" value="6"/>
</dbReference>
<proteinExistence type="evidence at transcript level"/>
<name>LYAM3_BOVIN</name>
<evidence type="ECO:0000250" key="1"/>
<evidence type="ECO:0000250" key="2">
    <source>
        <dbReference type="UniProtKB" id="P16109"/>
    </source>
</evidence>
<evidence type="ECO:0000255" key="3"/>
<evidence type="ECO:0000255" key="4">
    <source>
        <dbReference type="PROSITE-ProRule" id="PRU00040"/>
    </source>
</evidence>
<evidence type="ECO:0000255" key="5">
    <source>
        <dbReference type="PROSITE-ProRule" id="PRU00076"/>
    </source>
</evidence>
<evidence type="ECO:0000255" key="6">
    <source>
        <dbReference type="PROSITE-ProRule" id="PRU00302"/>
    </source>
</evidence>
<evidence type="ECO:0000269" key="7">
    <source>
    </source>
</evidence>
<evidence type="ECO:0000303" key="8">
    <source>
    </source>
</evidence>
<evidence type="ECO:0000305" key="9"/>